<sequence>MNISIISVGKIKEKFLKAAIDEYSKRLSKYCKLNIIEVPDEKTPDNASLKEENIIKEKEGTLILKHIKDNSFVIALDLKGKSIASEEFSDLIENCRLTGNSTIAFVIGGSLGLSEQVLSRANYRLSFSKMTFPHQLFRVMLLEQVYRAFRILCREPYHK</sequence>
<name>RLMH_CLOB6</name>
<proteinExistence type="inferred from homology"/>
<protein>
    <recommendedName>
        <fullName evidence="1">Ribosomal RNA large subunit methyltransferase H</fullName>
        <ecNumber evidence="1">2.1.1.177</ecNumber>
    </recommendedName>
    <alternativeName>
        <fullName evidence="1">23S rRNA (pseudouridine1915-N3)-methyltransferase</fullName>
    </alternativeName>
    <alternativeName>
        <fullName evidence="1">23S rRNA m3Psi1915 methyltransferase</fullName>
    </alternativeName>
    <alternativeName>
        <fullName evidence="1">rRNA (pseudouridine-N3-)-methyltransferase RlmH</fullName>
    </alternativeName>
</protein>
<accession>C3KWC5</accession>
<evidence type="ECO:0000255" key="1">
    <source>
        <dbReference type="HAMAP-Rule" id="MF_00658"/>
    </source>
</evidence>
<reference key="1">
    <citation type="submission" date="2008-05" db="EMBL/GenBank/DDBJ databases">
        <title>Genome sequence of Clostridium botulinum Ba4 strain 657.</title>
        <authorList>
            <person name="Shrivastava S."/>
            <person name="Brown J.L."/>
            <person name="Bruce D."/>
            <person name="Detter C."/>
            <person name="Munk C."/>
            <person name="Smith L.A."/>
            <person name="Smith T.J."/>
            <person name="Sutton G."/>
            <person name="Brettin T.S."/>
        </authorList>
    </citation>
    <scope>NUCLEOTIDE SEQUENCE [LARGE SCALE GENOMIC DNA]</scope>
    <source>
        <strain>657 / Type Ba4</strain>
    </source>
</reference>
<gene>
    <name evidence="1" type="primary">rlmH</name>
    <name type="ordered locus">CLJ_B3900</name>
</gene>
<feature type="chain" id="PRO_1000212446" description="Ribosomal RNA large subunit methyltransferase H">
    <location>
        <begin position="1"/>
        <end position="159"/>
    </location>
</feature>
<feature type="binding site" evidence="1">
    <location>
        <position position="76"/>
    </location>
    <ligand>
        <name>S-adenosyl-L-methionine</name>
        <dbReference type="ChEBI" id="CHEBI:59789"/>
    </ligand>
</feature>
<feature type="binding site" evidence="1">
    <location>
        <position position="108"/>
    </location>
    <ligand>
        <name>S-adenosyl-L-methionine</name>
        <dbReference type="ChEBI" id="CHEBI:59789"/>
    </ligand>
</feature>
<feature type="binding site" evidence="1">
    <location>
        <begin position="127"/>
        <end position="132"/>
    </location>
    <ligand>
        <name>S-adenosyl-L-methionine</name>
        <dbReference type="ChEBI" id="CHEBI:59789"/>
    </ligand>
</feature>
<keyword id="KW-0963">Cytoplasm</keyword>
<keyword id="KW-0489">Methyltransferase</keyword>
<keyword id="KW-0698">rRNA processing</keyword>
<keyword id="KW-0949">S-adenosyl-L-methionine</keyword>
<keyword id="KW-0808">Transferase</keyword>
<dbReference type="EC" id="2.1.1.177" evidence="1"/>
<dbReference type="EMBL" id="CP001083">
    <property type="protein sequence ID" value="ACQ52682.1"/>
    <property type="molecule type" value="Genomic_DNA"/>
</dbReference>
<dbReference type="RefSeq" id="WP_003361757.1">
    <property type="nucleotide sequence ID" value="NC_012658.1"/>
</dbReference>
<dbReference type="SMR" id="C3KWC5"/>
<dbReference type="KEGG" id="cbi:CLJ_B3900"/>
<dbReference type="HOGENOM" id="CLU_100552_0_0_9"/>
<dbReference type="Proteomes" id="UP000002333">
    <property type="component" value="Chromosome"/>
</dbReference>
<dbReference type="GO" id="GO:0005737">
    <property type="term" value="C:cytoplasm"/>
    <property type="evidence" value="ECO:0007669"/>
    <property type="project" value="UniProtKB-SubCell"/>
</dbReference>
<dbReference type="GO" id="GO:0070038">
    <property type="term" value="F:rRNA (pseudouridine-N3-)-methyltransferase activity"/>
    <property type="evidence" value="ECO:0007669"/>
    <property type="project" value="UniProtKB-UniRule"/>
</dbReference>
<dbReference type="CDD" id="cd18081">
    <property type="entry name" value="RlmH-like"/>
    <property type="match status" value="1"/>
</dbReference>
<dbReference type="Gene3D" id="3.40.1280.10">
    <property type="match status" value="1"/>
</dbReference>
<dbReference type="HAMAP" id="MF_00658">
    <property type="entry name" value="23SrRNA_methyltr_H"/>
    <property type="match status" value="1"/>
</dbReference>
<dbReference type="InterPro" id="IPR029028">
    <property type="entry name" value="Alpha/beta_knot_MTases"/>
</dbReference>
<dbReference type="InterPro" id="IPR003742">
    <property type="entry name" value="RlmH-like"/>
</dbReference>
<dbReference type="InterPro" id="IPR029026">
    <property type="entry name" value="tRNA_m1G_MTases_N"/>
</dbReference>
<dbReference type="NCBIfam" id="NF000985">
    <property type="entry name" value="PRK00103.1-3"/>
    <property type="match status" value="1"/>
</dbReference>
<dbReference type="NCBIfam" id="TIGR00246">
    <property type="entry name" value="tRNA_RlmH_YbeA"/>
    <property type="match status" value="1"/>
</dbReference>
<dbReference type="PANTHER" id="PTHR33603">
    <property type="entry name" value="METHYLTRANSFERASE"/>
    <property type="match status" value="1"/>
</dbReference>
<dbReference type="PANTHER" id="PTHR33603:SF1">
    <property type="entry name" value="RIBOSOMAL RNA LARGE SUBUNIT METHYLTRANSFERASE H"/>
    <property type="match status" value="1"/>
</dbReference>
<dbReference type="Pfam" id="PF02590">
    <property type="entry name" value="SPOUT_MTase"/>
    <property type="match status" value="1"/>
</dbReference>
<dbReference type="PIRSF" id="PIRSF004505">
    <property type="entry name" value="MT_bac"/>
    <property type="match status" value="1"/>
</dbReference>
<dbReference type="SUPFAM" id="SSF75217">
    <property type="entry name" value="alpha/beta knot"/>
    <property type="match status" value="1"/>
</dbReference>
<organism>
    <name type="scientific">Clostridium botulinum (strain 657 / Type Ba4)</name>
    <dbReference type="NCBI Taxonomy" id="515621"/>
    <lineage>
        <taxon>Bacteria</taxon>
        <taxon>Bacillati</taxon>
        <taxon>Bacillota</taxon>
        <taxon>Clostridia</taxon>
        <taxon>Eubacteriales</taxon>
        <taxon>Clostridiaceae</taxon>
        <taxon>Clostridium</taxon>
    </lineage>
</organism>
<comment type="function">
    <text evidence="1">Specifically methylates the pseudouridine at position 1915 (m3Psi1915) in 23S rRNA.</text>
</comment>
<comment type="catalytic activity">
    <reaction evidence="1">
        <text>pseudouridine(1915) in 23S rRNA + S-adenosyl-L-methionine = N(3)-methylpseudouridine(1915) in 23S rRNA + S-adenosyl-L-homocysteine + H(+)</text>
        <dbReference type="Rhea" id="RHEA:42752"/>
        <dbReference type="Rhea" id="RHEA-COMP:10221"/>
        <dbReference type="Rhea" id="RHEA-COMP:10222"/>
        <dbReference type="ChEBI" id="CHEBI:15378"/>
        <dbReference type="ChEBI" id="CHEBI:57856"/>
        <dbReference type="ChEBI" id="CHEBI:59789"/>
        <dbReference type="ChEBI" id="CHEBI:65314"/>
        <dbReference type="ChEBI" id="CHEBI:74486"/>
        <dbReference type="EC" id="2.1.1.177"/>
    </reaction>
</comment>
<comment type="subunit">
    <text evidence="1">Homodimer.</text>
</comment>
<comment type="subcellular location">
    <subcellularLocation>
        <location evidence="1">Cytoplasm</location>
    </subcellularLocation>
</comment>
<comment type="similarity">
    <text evidence="1">Belongs to the RNA methyltransferase RlmH family.</text>
</comment>